<accession>Q8ZN52</accession>
<keyword id="KW-0004">4Fe-4S</keyword>
<keyword id="KW-0963">Cytoplasm</keyword>
<keyword id="KW-1015">Disulfide bond</keyword>
<keyword id="KW-0408">Iron</keyword>
<keyword id="KW-0411">Iron-sulfur</keyword>
<keyword id="KW-0479">Metal-binding</keyword>
<keyword id="KW-0489">Methyltransferase</keyword>
<keyword id="KW-1185">Reference proteome</keyword>
<keyword id="KW-0698">rRNA processing</keyword>
<keyword id="KW-0949">S-adenosyl-L-methionine</keyword>
<keyword id="KW-0808">Transferase</keyword>
<keyword id="KW-0819">tRNA processing</keyword>
<sequence length="388" mass="43510">MSEQIVTPESSTPVVPNKETKINLLDLNRQQMREFFKNLGEKPFRADQVMKWMYHYCCDNFDEMTDINKVLRGKLKEVAEIRAPEVVEEQRSSDGTIKWAIAVGDQRVETVYIPEDDRATLCVSSQVGCALECKFCSTAQQGFNRNLRVSEIIGQVWRAAKIVGAAKVTGQRPITNVVMMGMGEPLLNLTNVVPAMEIMLDDFGFGLSKRRVTLSTSGVVPALDKLGDMIDVALAISLHAPNDTIRDEIVPINKKYNIETFLGAVRRYLEKSNANQGRVTIEYVMLDHVNDGTEHAHQLAELLKETPCKINLIPWNPFPGAPYGRSSNSRIDRFSKVLMSYGFTTIVRKTRGDDIDAACGQLAGDVIDRTKRTLRKRMQGEVIDIKAI</sequence>
<comment type="function">
    <text evidence="1">Specifically methylates position 2 of adenine 2503 in 23S rRNA and position 2 of adenine 37 in tRNAs. m2A2503 modification seems to play a crucial role in the proofreading step occurring at the peptidyl transferase center and thus would serve to optimize ribosomal fidelity.</text>
</comment>
<comment type="catalytic activity">
    <reaction evidence="1">
        <text>adenosine(2503) in 23S rRNA + 2 reduced [2Fe-2S]-[ferredoxin] + 2 S-adenosyl-L-methionine = 2-methyladenosine(2503) in 23S rRNA + 5'-deoxyadenosine + L-methionine + 2 oxidized [2Fe-2S]-[ferredoxin] + S-adenosyl-L-homocysteine</text>
        <dbReference type="Rhea" id="RHEA:42916"/>
        <dbReference type="Rhea" id="RHEA-COMP:10000"/>
        <dbReference type="Rhea" id="RHEA-COMP:10001"/>
        <dbReference type="Rhea" id="RHEA-COMP:10152"/>
        <dbReference type="Rhea" id="RHEA-COMP:10282"/>
        <dbReference type="ChEBI" id="CHEBI:17319"/>
        <dbReference type="ChEBI" id="CHEBI:33737"/>
        <dbReference type="ChEBI" id="CHEBI:33738"/>
        <dbReference type="ChEBI" id="CHEBI:57844"/>
        <dbReference type="ChEBI" id="CHEBI:57856"/>
        <dbReference type="ChEBI" id="CHEBI:59789"/>
        <dbReference type="ChEBI" id="CHEBI:74411"/>
        <dbReference type="ChEBI" id="CHEBI:74497"/>
        <dbReference type="EC" id="2.1.1.192"/>
    </reaction>
</comment>
<comment type="catalytic activity">
    <reaction evidence="1">
        <text>adenosine(37) in tRNA + 2 reduced [2Fe-2S]-[ferredoxin] + 2 S-adenosyl-L-methionine = 2-methyladenosine(37) in tRNA + 5'-deoxyadenosine + L-methionine + 2 oxidized [2Fe-2S]-[ferredoxin] + S-adenosyl-L-homocysteine</text>
        <dbReference type="Rhea" id="RHEA:43332"/>
        <dbReference type="Rhea" id="RHEA-COMP:10000"/>
        <dbReference type="Rhea" id="RHEA-COMP:10001"/>
        <dbReference type="Rhea" id="RHEA-COMP:10162"/>
        <dbReference type="Rhea" id="RHEA-COMP:10485"/>
        <dbReference type="ChEBI" id="CHEBI:17319"/>
        <dbReference type="ChEBI" id="CHEBI:33737"/>
        <dbReference type="ChEBI" id="CHEBI:33738"/>
        <dbReference type="ChEBI" id="CHEBI:57844"/>
        <dbReference type="ChEBI" id="CHEBI:57856"/>
        <dbReference type="ChEBI" id="CHEBI:59789"/>
        <dbReference type="ChEBI" id="CHEBI:74411"/>
        <dbReference type="ChEBI" id="CHEBI:74497"/>
        <dbReference type="EC" id="2.1.1.192"/>
    </reaction>
</comment>
<comment type="cofactor">
    <cofactor evidence="1">
        <name>[4Fe-4S] cluster</name>
        <dbReference type="ChEBI" id="CHEBI:49883"/>
    </cofactor>
    <text evidence="1">Binds 1 [4Fe-4S] cluster. The cluster is coordinated with 3 cysteines and an exchangeable S-adenosyl-L-methionine.</text>
</comment>
<comment type="subcellular location">
    <subcellularLocation>
        <location evidence="1">Cytoplasm</location>
    </subcellularLocation>
</comment>
<comment type="miscellaneous">
    <text evidence="1">Reaction proceeds by a ping-pong mechanism involving intermediate methylation of a conserved cysteine residue.</text>
</comment>
<comment type="similarity">
    <text evidence="1">Belongs to the radical SAM superfamily. RlmN family.</text>
</comment>
<gene>
    <name evidence="1" type="primary">rlmN</name>
    <name type="ordered locus">STM2525</name>
</gene>
<protein>
    <recommendedName>
        <fullName evidence="1">Dual-specificity RNA methyltransferase RlmN</fullName>
        <ecNumber evidence="1">2.1.1.192</ecNumber>
    </recommendedName>
    <alternativeName>
        <fullName evidence="1">23S rRNA (adenine(2503)-C(2))-methyltransferase</fullName>
    </alternativeName>
    <alternativeName>
        <fullName evidence="1">23S rRNA m2A2503 methyltransferase</fullName>
    </alternativeName>
    <alternativeName>
        <fullName evidence="1">Ribosomal RNA large subunit methyltransferase N</fullName>
    </alternativeName>
    <alternativeName>
        <fullName evidence="1">tRNA (adenine(37)-C(2))-methyltransferase</fullName>
    </alternativeName>
    <alternativeName>
        <fullName evidence="1">tRNA m2A37 methyltransferase</fullName>
    </alternativeName>
</protein>
<name>RLMN_SALTY</name>
<organism>
    <name type="scientific">Salmonella typhimurium (strain LT2 / SGSC1412 / ATCC 700720)</name>
    <dbReference type="NCBI Taxonomy" id="99287"/>
    <lineage>
        <taxon>Bacteria</taxon>
        <taxon>Pseudomonadati</taxon>
        <taxon>Pseudomonadota</taxon>
        <taxon>Gammaproteobacteria</taxon>
        <taxon>Enterobacterales</taxon>
        <taxon>Enterobacteriaceae</taxon>
        <taxon>Salmonella</taxon>
    </lineage>
</organism>
<feature type="chain" id="PRO_0000350390" description="Dual-specificity RNA methyltransferase RlmN">
    <location>
        <begin position="1"/>
        <end position="388"/>
    </location>
</feature>
<feature type="domain" description="Radical SAM core" evidence="2">
    <location>
        <begin position="115"/>
        <end position="354"/>
    </location>
</feature>
<feature type="active site" description="Proton acceptor" evidence="1">
    <location>
        <position position="109"/>
    </location>
</feature>
<feature type="active site" description="S-methylcysteine intermediate" evidence="1">
    <location>
        <position position="359"/>
    </location>
</feature>
<feature type="binding site" evidence="1">
    <location>
        <position position="129"/>
    </location>
    <ligand>
        <name>[4Fe-4S] cluster</name>
        <dbReference type="ChEBI" id="CHEBI:49883"/>
        <note>4Fe-4S-S-AdoMet</note>
    </ligand>
</feature>
<feature type="binding site" evidence="1">
    <location>
        <position position="133"/>
    </location>
    <ligand>
        <name>[4Fe-4S] cluster</name>
        <dbReference type="ChEBI" id="CHEBI:49883"/>
        <note>4Fe-4S-S-AdoMet</note>
    </ligand>
</feature>
<feature type="binding site" evidence="1">
    <location>
        <position position="136"/>
    </location>
    <ligand>
        <name>[4Fe-4S] cluster</name>
        <dbReference type="ChEBI" id="CHEBI:49883"/>
        <note>4Fe-4S-S-AdoMet</note>
    </ligand>
</feature>
<feature type="binding site" evidence="1">
    <location>
        <begin position="183"/>
        <end position="184"/>
    </location>
    <ligand>
        <name>S-adenosyl-L-methionine</name>
        <dbReference type="ChEBI" id="CHEBI:59789"/>
    </ligand>
</feature>
<feature type="binding site" evidence="1">
    <location>
        <position position="215"/>
    </location>
    <ligand>
        <name>S-adenosyl-L-methionine</name>
        <dbReference type="ChEBI" id="CHEBI:59789"/>
    </ligand>
</feature>
<feature type="binding site" evidence="1">
    <location>
        <begin position="237"/>
        <end position="239"/>
    </location>
    <ligand>
        <name>S-adenosyl-L-methionine</name>
        <dbReference type="ChEBI" id="CHEBI:59789"/>
    </ligand>
</feature>
<feature type="binding site" evidence="1">
    <location>
        <position position="316"/>
    </location>
    <ligand>
        <name>S-adenosyl-L-methionine</name>
        <dbReference type="ChEBI" id="CHEBI:59789"/>
    </ligand>
</feature>
<feature type="disulfide bond" description="(transient)" evidence="1">
    <location>
        <begin position="122"/>
        <end position="359"/>
    </location>
</feature>
<dbReference type="EC" id="2.1.1.192" evidence="1"/>
<dbReference type="EMBL" id="AE006468">
    <property type="protein sequence ID" value="AAL21419.1"/>
    <property type="molecule type" value="Genomic_DNA"/>
</dbReference>
<dbReference type="RefSeq" id="WP_000003211.1">
    <property type="nucleotide sequence ID" value="NC_003197.2"/>
</dbReference>
<dbReference type="SMR" id="Q8ZN52"/>
<dbReference type="STRING" id="99287.STM2525"/>
<dbReference type="PaxDb" id="99287-STM2525"/>
<dbReference type="KEGG" id="stm:STM2525"/>
<dbReference type="PATRIC" id="fig|99287.12.peg.2662"/>
<dbReference type="HOGENOM" id="CLU_029101_0_0_6"/>
<dbReference type="OMA" id="GTIKWAM"/>
<dbReference type="PhylomeDB" id="Q8ZN52"/>
<dbReference type="BioCyc" id="SENT99287:STM2525-MONOMER"/>
<dbReference type="Proteomes" id="UP000001014">
    <property type="component" value="Chromosome"/>
</dbReference>
<dbReference type="GO" id="GO:0005737">
    <property type="term" value="C:cytoplasm"/>
    <property type="evidence" value="ECO:0007669"/>
    <property type="project" value="UniProtKB-SubCell"/>
</dbReference>
<dbReference type="GO" id="GO:0051539">
    <property type="term" value="F:4 iron, 4 sulfur cluster binding"/>
    <property type="evidence" value="ECO:0007669"/>
    <property type="project" value="UniProtKB-UniRule"/>
</dbReference>
<dbReference type="GO" id="GO:0046872">
    <property type="term" value="F:metal ion binding"/>
    <property type="evidence" value="ECO:0007669"/>
    <property type="project" value="UniProtKB-KW"/>
</dbReference>
<dbReference type="GO" id="GO:0070040">
    <property type="term" value="F:rRNA (adenine(2503)-C2-)-methyltransferase activity"/>
    <property type="evidence" value="ECO:0007669"/>
    <property type="project" value="UniProtKB-UniRule"/>
</dbReference>
<dbReference type="GO" id="GO:0019843">
    <property type="term" value="F:rRNA binding"/>
    <property type="evidence" value="ECO:0007669"/>
    <property type="project" value="UniProtKB-UniRule"/>
</dbReference>
<dbReference type="GO" id="GO:0002935">
    <property type="term" value="F:tRNA (adenine(37)-C2)-methyltransferase activity"/>
    <property type="evidence" value="ECO:0007669"/>
    <property type="project" value="UniProtKB-UniRule"/>
</dbReference>
<dbReference type="GO" id="GO:0000049">
    <property type="term" value="F:tRNA binding"/>
    <property type="evidence" value="ECO:0007669"/>
    <property type="project" value="UniProtKB-UniRule"/>
</dbReference>
<dbReference type="GO" id="GO:0070475">
    <property type="term" value="P:rRNA base methylation"/>
    <property type="evidence" value="ECO:0000318"/>
    <property type="project" value="GO_Central"/>
</dbReference>
<dbReference type="GO" id="GO:0030488">
    <property type="term" value="P:tRNA methylation"/>
    <property type="evidence" value="ECO:0000318"/>
    <property type="project" value="GO_Central"/>
</dbReference>
<dbReference type="CDD" id="cd01335">
    <property type="entry name" value="Radical_SAM"/>
    <property type="match status" value="1"/>
</dbReference>
<dbReference type="FunFam" id="1.10.150.530:FF:000001">
    <property type="entry name" value="Dual-specificity RNA methyltransferase RlmN"/>
    <property type="match status" value="1"/>
</dbReference>
<dbReference type="FunFam" id="3.20.20.70:FF:000008">
    <property type="entry name" value="Dual-specificity RNA methyltransferase RlmN"/>
    <property type="match status" value="1"/>
</dbReference>
<dbReference type="Gene3D" id="1.10.150.530">
    <property type="match status" value="1"/>
</dbReference>
<dbReference type="Gene3D" id="3.20.20.70">
    <property type="entry name" value="Aldolase class I"/>
    <property type="match status" value="1"/>
</dbReference>
<dbReference type="HAMAP" id="MF_01849">
    <property type="entry name" value="RNA_methyltr_RlmN"/>
    <property type="match status" value="1"/>
</dbReference>
<dbReference type="InterPro" id="IPR013785">
    <property type="entry name" value="Aldolase_TIM"/>
</dbReference>
<dbReference type="InterPro" id="IPR040072">
    <property type="entry name" value="Methyltransferase_A"/>
</dbReference>
<dbReference type="InterPro" id="IPR048641">
    <property type="entry name" value="RlmN_N"/>
</dbReference>
<dbReference type="InterPro" id="IPR027492">
    <property type="entry name" value="RNA_MTrfase_RlmN"/>
</dbReference>
<dbReference type="InterPro" id="IPR004383">
    <property type="entry name" value="rRNA_lsu_MTrfase_RlmN/Cfr"/>
</dbReference>
<dbReference type="InterPro" id="IPR007197">
    <property type="entry name" value="rSAM"/>
</dbReference>
<dbReference type="NCBIfam" id="NF008396">
    <property type="entry name" value="PRK11194.1"/>
    <property type="match status" value="1"/>
</dbReference>
<dbReference type="NCBIfam" id="TIGR00048">
    <property type="entry name" value="rRNA_mod_RlmN"/>
    <property type="match status" value="1"/>
</dbReference>
<dbReference type="PANTHER" id="PTHR30544">
    <property type="entry name" value="23S RRNA METHYLTRANSFERASE"/>
    <property type="match status" value="1"/>
</dbReference>
<dbReference type="PANTHER" id="PTHR30544:SF5">
    <property type="entry name" value="RADICAL SAM CORE DOMAIN-CONTAINING PROTEIN"/>
    <property type="match status" value="1"/>
</dbReference>
<dbReference type="Pfam" id="PF04055">
    <property type="entry name" value="Radical_SAM"/>
    <property type="match status" value="1"/>
</dbReference>
<dbReference type="Pfam" id="PF21016">
    <property type="entry name" value="RlmN_N"/>
    <property type="match status" value="1"/>
</dbReference>
<dbReference type="PIRSF" id="PIRSF006004">
    <property type="entry name" value="CHP00048"/>
    <property type="match status" value="1"/>
</dbReference>
<dbReference type="SFLD" id="SFLDF00275">
    <property type="entry name" value="adenosine_C2_methyltransferase"/>
    <property type="match status" value="1"/>
</dbReference>
<dbReference type="SFLD" id="SFLDS00029">
    <property type="entry name" value="Radical_SAM"/>
    <property type="match status" value="1"/>
</dbReference>
<dbReference type="SUPFAM" id="SSF102114">
    <property type="entry name" value="Radical SAM enzymes"/>
    <property type="match status" value="1"/>
</dbReference>
<dbReference type="PROSITE" id="PS51918">
    <property type="entry name" value="RADICAL_SAM"/>
    <property type="match status" value="1"/>
</dbReference>
<reference key="1">
    <citation type="journal article" date="2001" name="Nature">
        <title>Complete genome sequence of Salmonella enterica serovar Typhimurium LT2.</title>
        <authorList>
            <person name="McClelland M."/>
            <person name="Sanderson K.E."/>
            <person name="Spieth J."/>
            <person name="Clifton S.W."/>
            <person name="Latreille P."/>
            <person name="Courtney L."/>
            <person name="Porwollik S."/>
            <person name="Ali J."/>
            <person name="Dante M."/>
            <person name="Du F."/>
            <person name="Hou S."/>
            <person name="Layman D."/>
            <person name="Leonard S."/>
            <person name="Nguyen C."/>
            <person name="Scott K."/>
            <person name="Holmes A."/>
            <person name="Grewal N."/>
            <person name="Mulvaney E."/>
            <person name="Ryan E."/>
            <person name="Sun H."/>
            <person name="Florea L."/>
            <person name="Miller W."/>
            <person name="Stoneking T."/>
            <person name="Nhan M."/>
            <person name="Waterston R."/>
            <person name="Wilson R.K."/>
        </authorList>
    </citation>
    <scope>NUCLEOTIDE SEQUENCE [LARGE SCALE GENOMIC DNA]</scope>
    <source>
        <strain>LT2 / SGSC1412 / ATCC 700720</strain>
    </source>
</reference>
<evidence type="ECO:0000255" key="1">
    <source>
        <dbReference type="HAMAP-Rule" id="MF_01849"/>
    </source>
</evidence>
<evidence type="ECO:0000255" key="2">
    <source>
        <dbReference type="PROSITE-ProRule" id="PRU01266"/>
    </source>
</evidence>
<proteinExistence type="inferred from homology"/>